<accession>B8F5F8</accession>
<comment type="function">
    <text evidence="1">Could be a nuclease involved in processing of the 5'-end of pre-16S rRNA.</text>
</comment>
<comment type="subcellular location">
    <subcellularLocation>
        <location evidence="1">Cytoplasm</location>
    </subcellularLocation>
</comment>
<comment type="similarity">
    <text evidence="1">Belongs to the YqgF nuclease family.</text>
</comment>
<gene>
    <name type="ordered locus">HAPS_0933</name>
</gene>
<reference key="1">
    <citation type="journal article" date="2009" name="J. Bacteriol.">
        <title>Complete genome sequence of Haemophilus parasuis SH0165.</title>
        <authorList>
            <person name="Yue M."/>
            <person name="Yang F."/>
            <person name="Yang J."/>
            <person name="Bei W."/>
            <person name="Cai X."/>
            <person name="Chen L."/>
            <person name="Dong J."/>
            <person name="Zhou R."/>
            <person name="Jin M."/>
            <person name="Jin Q."/>
            <person name="Chen H."/>
        </authorList>
    </citation>
    <scope>NUCLEOTIDE SEQUENCE [LARGE SCALE GENOMIC DNA]</scope>
    <source>
        <strain>SH0165</strain>
    </source>
</reference>
<proteinExistence type="inferred from homology"/>
<dbReference type="EC" id="3.1.-.-" evidence="1"/>
<dbReference type="EMBL" id="CP001321">
    <property type="protein sequence ID" value="ACL32560.1"/>
    <property type="molecule type" value="Genomic_DNA"/>
</dbReference>
<dbReference type="SMR" id="B8F5F8"/>
<dbReference type="STRING" id="557723.HAPS_0933"/>
<dbReference type="KEGG" id="hap:HAPS_0933"/>
<dbReference type="HOGENOM" id="CLU_098240_3_0_6"/>
<dbReference type="Proteomes" id="UP000006743">
    <property type="component" value="Chromosome"/>
</dbReference>
<dbReference type="GO" id="GO:0005829">
    <property type="term" value="C:cytosol"/>
    <property type="evidence" value="ECO:0007669"/>
    <property type="project" value="TreeGrafter"/>
</dbReference>
<dbReference type="GO" id="GO:0004518">
    <property type="term" value="F:nuclease activity"/>
    <property type="evidence" value="ECO:0007669"/>
    <property type="project" value="UniProtKB-KW"/>
</dbReference>
<dbReference type="GO" id="GO:0000967">
    <property type="term" value="P:rRNA 5'-end processing"/>
    <property type="evidence" value="ECO:0007669"/>
    <property type="project" value="UniProtKB-UniRule"/>
</dbReference>
<dbReference type="CDD" id="cd16964">
    <property type="entry name" value="YqgF"/>
    <property type="match status" value="1"/>
</dbReference>
<dbReference type="FunFam" id="3.30.420.140:FF:000002">
    <property type="entry name" value="Putative pre-16S rRNA nuclease"/>
    <property type="match status" value="1"/>
</dbReference>
<dbReference type="Gene3D" id="3.30.420.140">
    <property type="entry name" value="YqgF/RNase H-like domain"/>
    <property type="match status" value="1"/>
</dbReference>
<dbReference type="HAMAP" id="MF_00651">
    <property type="entry name" value="Nuclease_YqgF"/>
    <property type="match status" value="1"/>
</dbReference>
<dbReference type="InterPro" id="IPR012337">
    <property type="entry name" value="RNaseH-like_sf"/>
</dbReference>
<dbReference type="InterPro" id="IPR005227">
    <property type="entry name" value="YqgF"/>
</dbReference>
<dbReference type="InterPro" id="IPR006641">
    <property type="entry name" value="YqgF/RNaseH-like_dom"/>
</dbReference>
<dbReference type="InterPro" id="IPR037027">
    <property type="entry name" value="YqgF/RNaseH-like_dom_sf"/>
</dbReference>
<dbReference type="NCBIfam" id="TIGR00250">
    <property type="entry name" value="RNAse_H_YqgF"/>
    <property type="match status" value="1"/>
</dbReference>
<dbReference type="PANTHER" id="PTHR33317">
    <property type="entry name" value="POLYNUCLEOTIDYL TRANSFERASE, RIBONUCLEASE H-LIKE SUPERFAMILY PROTEIN"/>
    <property type="match status" value="1"/>
</dbReference>
<dbReference type="PANTHER" id="PTHR33317:SF4">
    <property type="entry name" value="POLYNUCLEOTIDYL TRANSFERASE, RIBONUCLEASE H-LIKE SUPERFAMILY PROTEIN"/>
    <property type="match status" value="1"/>
</dbReference>
<dbReference type="Pfam" id="PF03652">
    <property type="entry name" value="RuvX"/>
    <property type="match status" value="1"/>
</dbReference>
<dbReference type="SMART" id="SM00732">
    <property type="entry name" value="YqgFc"/>
    <property type="match status" value="1"/>
</dbReference>
<dbReference type="SUPFAM" id="SSF53098">
    <property type="entry name" value="Ribonuclease H-like"/>
    <property type="match status" value="1"/>
</dbReference>
<name>YQGF_GLAP5</name>
<keyword id="KW-0963">Cytoplasm</keyword>
<keyword id="KW-0378">Hydrolase</keyword>
<keyword id="KW-0540">Nuclease</keyword>
<keyword id="KW-1185">Reference proteome</keyword>
<keyword id="KW-0690">Ribosome biogenesis</keyword>
<organism>
    <name type="scientific">Glaesserella parasuis serovar 5 (strain SH0165)</name>
    <name type="common">Haemophilus parasuis</name>
    <dbReference type="NCBI Taxonomy" id="557723"/>
    <lineage>
        <taxon>Bacteria</taxon>
        <taxon>Pseudomonadati</taxon>
        <taxon>Pseudomonadota</taxon>
        <taxon>Gammaproteobacteria</taxon>
        <taxon>Pasteurellales</taxon>
        <taxon>Pasteurellaceae</taxon>
        <taxon>Glaesserella</taxon>
    </lineage>
</organism>
<protein>
    <recommendedName>
        <fullName evidence="1">Putative pre-16S rRNA nuclease</fullName>
        <ecNumber evidence="1">3.1.-.-</ecNumber>
    </recommendedName>
</protein>
<sequence>MSQTVLAFDFGTNSIGCAVGQSITGTAQGLPAFKAQDGIPNWEQIGKVIAQWQPDLLVVGLPLNMDGTEQPLTQRAKKFANRLNGRFNLPVELQDERLTTVEAKSEIFARGGFKALKKGKVDAISACLILESWFEQQS</sequence>
<evidence type="ECO:0000255" key="1">
    <source>
        <dbReference type="HAMAP-Rule" id="MF_00651"/>
    </source>
</evidence>
<feature type="chain" id="PRO_1000147482" description="Putative pre-16S rRNA nuclease">
    <location>
        <begin position="1"/>
        <end position="138"/>
    </location>
</feature>